<reference key="1">
    <citation type="journal article" date="2003" name="Lancet">
        <title>Genome sequence of Vibrio parahaemolyticus: a pathogenic mechanism distinct from that of V. cholerae.</title>
        <authorList>
            <person name="Makino K."/>
            <person name="Oshima K."/>
            <person name="Kurokawa K."/>
            <person name="Yokoyama K."/>
            <person name="Uda T."/>
            <person name="Tagomori K."/>
            <person name="Iijima Y."/>
            <person name="Najima M."/>
            <person name="Nakano M."/>
            <person name="Yamashita A."/>
            <person name="Kubota Y."/>
            <person name="Kimura S."/>
            <person name="Yasunaga T."/>
            <person name="Honda T."/>
            <person name="Shinagawa H."/>
            <person name="Hattori M."/>
            <person name="Iida T."/>
        </authorList>
    </citation>
    <scope>NUCLEOTIDE SEQUENCE [LARGE SCALE GENOMIC DNA]</scope>
    <source>
        <strain>RIMD 2210633</strain>
    </source>
</reference>
<gene>
    <name evidence="1" type="primary">smpB</name>
    <name type="ordered locus">VP0644</name>
</gene>
<evidence type="ECO:0000255" key="1">
    <source>
        <dbReference type="HAMAP-Rule" id="MF_00023"/>
    </source>
</evidence>
<dbReference type="EMBL" id="BA000031">
    <property type="protein sequence ID" value="BAC58907.1"/>
    <property type="molecule type" value="Genomic_DNA"/>
</dbReference>
<dbReference type="RefSeq" id="NP_797023.1">
    <property type="nucleotide sequence ID" value="NC_004603.1"/>
</dbReference>
<dbReference type="RefSeq" id="WP_005455975.1">
    <property type="nucleotide sequence ID" value="NC_004603.1"/>
</dbReference>
<dbReference type="SMR" id="Q87RY2"/>
<dbReference type="GeneID" id="1188119"/>
<dbReference type="KEGG" id="vpa:VP0644"/>
<dbReference type="PATRIC" id="fig|223926.6.peg.613"/>
<dbReference type="eggNOG" id="COG0691">
    <property type="taxonomic scope" value="Bacteria"/>
</dbReference>
<dbReference type="HOGENOM" id="CLU_108953_3_0_6"/>
<dbReference type="Proteomes" id="UP000002493">
    <property type="component" value="Chromosome 1"/>
</dbReference>
<dbReference type="GO" id="GO:0005829">
    <property type="term" value="C:cytosol"/>
    <property type="evidence" value="ECO:0007669"/>
    <property type="project" value="TreeGrafter"/>
</dbReference>
<dbReference type="GO" id="GO:0003723">
    <property type="term" value="F:RNA binding"/>
    <property type="evidence" value="ECO:0007669"/>
    <property type="project" value="UniProtKB-UniRule"/>
</dbReference>
<dbReference type="GO" id="GO:0070929">
    <property type="term" value="P:trans-translation"/>
    <property type="evidence" value="ECO:0007669"/>
    <property type="project" value="UniProtKB-UniRule"/>
</dbReference>
<dbReference type="CDD" id="cd09294">
    <property type="entry name" value="SmpB"/>
    <property type="match status" value="1"/>
</dbReference>
<dbReference type="Gene3D" id="2.40.280.10">
    <property type="match status" value="1"/>
</dbReference>
<dbReference type="HAMAP" id="MF_00023">
    <property type="entry name" value="SmpB"/>
    <property type="match status" value="1"/>
</dbReference>
<dbReference type="InterPro" id="IPR023620">
    <property type="entry name" value="SmpB"/>
</dbReference>
<dbReference type="InterPro" id="IPR000037">
    <property type="entry name" value="SsrA-bd_prot"/>
</dbReference>
<dbReference type="InterPro" id="IPR020081">
    <property type="entry name" value="SsrA-bd_prot_CS"/>
</dbReference>
<dbReference type="NCBIfam" id="NF003843">
    <property type="entry name" value="PRK05422.1"/>
    <property type="match status" value="1"/>
</dbReference>
<dbReference type="NCBIfam" id="TIGR00086">
    <property type="entry name" value="smpB"/>
    <property type="match status" value="1"/>
</dbReference>
<dbReference type="PANTHER" id="PTHR30308:SF2">
    <property type="entry name" value="SSRA-BINDING PROTEIN"/>
    <property type="match status" value="1"/>
</dbReference>
<dbReference type="PANTHER" id="PTHR30308">
    <property type="entry name" value="TMRNA-BINDING COMPONENT OF TRANS-TRANSLATION TAGGING COMPLEX"/>
    <property type="match status" value="1"/>
</dbReference>
<dbReference type="Pfam" id="PF01668">
    <property type="entry name" value="SmpB"/>
    <property type="match status" value="1"/>
</dbReference>
<dbReference type="SUPFAM" id="SSF74982">
    <property type="entry name" value="Small protein B (SmpB)"/>
    <property type="match status" value="1"/>
</dbReference>
<dbReference type="PROSITE" id="PS01317">
    <property type="entry name" value="SSRP"/>
    <property type="match status" value="1"/>
</dbReference>
<proteinExistence type="inferred from homology"/>
<keyword id="KW-0963">Cytoplasm</keyword>
<keyword id="KW-0694">RNA-binding</keyword>
<protein>
    <recommendedName>
        <fullName evidence="1">SsrA-binding protein</fullName>
    </recommendedName>
    <alternativeName>
        <fullName evidence="1">Small protein B</fullName>
    </alternativeName>
</protein>
<organism>
    <name type="scientific">Vibrio parahaemolyticus serotype O3:K6 (strain RIMD 2210633)</name>
    <dbReference type="NCBI Taxonomy" id="223926"/>
    <lineage>
        <taxon>Bacteria</taxon>
        <taxon>Pseudomonadati</taxon>
        <taxon>Pseudomonadota</taxon>
        <taxon>Gammaproteobacteria</taxon>
        <taxon>Vibrionales</taxon>
        <taxon>Vibrionaceae</taxon>
        <taxon>Vibrio</taxon>
    </lineage>
</organism>
<accession>Q87RY2</accession>
<comment type="function">
    <text evidence="1">Required for rescue of stalled ribosomes mediated by trans-translation. Binds to transfer-messenger RNA (tmRNA), required for stable association of tmRNA with ribosomes. tmRNA and SmpB together mimic tRNA shape, replacing the anticodon stem-loop with SmpB. tmRNA is encoded by the ssrA gene; the 2 termini fold to resemble tRNA(Ala) and it encodes a 'tag peptide', a short internal open reading frame. During trans-translation Ala-aminoacylated tmRNA acts like a tRNA, entering the A-site of stalled ribosomes, displacing the stalled mRNA. The ribosome then switches to translate the ORF on the tmRNA; the nascent peptide is terminated with the 'tag peptide' encoded by the tmRNA and targeted for degradation. The ribosome is freed to recommence translation, which seems to be the essential function of trans-translation.</text>
</comment>
<comment type="subcellular location">
    <subcellularLocation>
        <location evidence="1">Cytoplasm</location>
    </subcellularLocation>
    <text evidence="1">The tmRNA-SmpB complex associates with stalled 70S ribosomes.</text>
</comment>
<comment type="similarity">
    <text evidence="1">Belongs to the SmpB family.</text>
</comment>
<feature type="chain" id="PRO_0000103065" description="SsrA-binding protein">
    <location>
        <begin position="1"/>
        <end position="161"/>
    </location>
</feature>
<name>SSRP_VIBPA</name>
<sequence length="161" mass="18399">MAKKKSKQKAGSNTIALNKKARHEYFIEDEIEAGLELQGWEVKALRQGKANISESYVFMRDGEAFVSGMTITPLNQASTHVVANPTRVRKLLMSRRELDNLLGRINREGMTLTALSLYWSRSWVKIKIGVAKGKKLHDKRTDLKEKDWAREKARVMKSALR</sequence>